<organism>
    <name type="scientific">Oryctolagus cuniculus</name>
    <name type="common">Rabbit</name>
    <dbReference type="NCBI Taxonomy" id="9986"/>
    <lineage>
        <taxon>Eukaryota</taxon>
        <taxon>Metazoa</taxon>
        <taxon>Chordata</taxon>
        <taxon>Craniata</taxon>
        <taxon>Vertebrata</taxon>
        <taxon>Euteleostomi</taxon>
        <taxon>Mammalia</taxon>
        <taxon>Eutheria</taxon>
        <taxon>Euarchontoglires</taxon>
        <taxon>Glires</taxon>
        <taxon>Lagomorpha</taxon>
        <taxon>Leporidae</taxon>
        <taxon>Oryctolagus</taxon>
    </lineage>
</organism>
<dbReference type="EMBL" id="AF069713">
    <property type="protein sequence ID" value="AAC95005.1"/>
    <property type="molecule type" value="mRNA"/>
</dbReference>
<dbReference type="SMR" id="Q9TRZ7"/>
<dbReference type="FunCoup" id="Q9TRZ7">
    <property type="interactions" value="11"/>
</dbReference>
<dbReference type="STRING" id="9986.ENSOCUP00000005290"/>
<dbReference type="MEROPS" id="I35.002"/>
<dbReference type="InParanoid" id="Q9TRZ7"/>
<dbReference type="Proteomes" id="UP000001811">
    <property type="component" value="Unplaced"/>
</dbReference>
<dbReference type="GO" id="GO:0031012">
    <property type="term" value="C:extracellular matrix"/>
    <property type="evidence" value="ECO:0007669"/>
    <property type="project" value="TreeGrafter"/>
</dbReference>
<dbReference type="GO" id="GO:0005615">
    <property type="term" value="C:extracellular space"/>
    <property type="evidence" value="ECO:0007669"/>
    <property type="project" value="TreeGrafter"/>
</dbReference>
<dbReference type="GO" id="GO:0046872">
    <property type="term" value="F:metal ion binding"/>
    <property type="evidence" value="ECO:0007669"/>
    <property type="project" value="UniProtKB-KW"/>
</dbReference>
<dbReference type="GO" id="GO:0008191">
    <property type="term" value="F:metalloendopeptidase inhibitor activity"/>
    <property type="evidence" value="ECO:0007669"/>
    <property type="project" value="InterPro"/>
</dbReference>
<dbReference type="GO" id="GO:0002020">
    <property type="term" value="F:protease binding"/>
    <property type="evidence" value="ECO:0007669"/>
    <property type="project" value="TreeGrafter"/>
</dbReference>
<dbReference type="GO" id="GO:0051045">
    <property type="term" value="P:negative regulation of membrane protein ectodomain proteolysis"/>
    <property type="evidence" value="ECO:0007669"/>
    <property type="project" value="TreeGrafter"/>
</dbReference>
<dbReference type="GO" id="GO:0034097">
    <property type="term" value="P:response to cytokine"/>
    <property type="evidence" value="ECO:0007669"/>
    <property type="project" value="TreeGrafter"/>
</dbReference>
<dbReference type="GO" id="GO:0009725">
    <property type="term" value="P:response to hormone"/>
    <property type="evidence" value="ECO:0007669"/>
    <property type="project" value="TreeGrafter"/>
</dbReference>
<dbReference type="CDD" id="cd03585">
    <property type="entry name" value="NTR_TIMP"/>
    <property type="match status" value="1"/>
</dbReference>
<dbReference type="FunFam" id="2.40.50.120:FF:000007">
    <property type="entry name" value="Metalloproteinase inhibitor 2"/>
    <property type="match status" value="1"/>
</dbReference>
<dbReference type="FunFam" id="3.90.370.10:FF:000001">
    <property type="entry name" value="Metalloproteinase inhibitor 3"/>
    <property type="match status" value="1"/>
</dbReference>
<dbReference type="Gene3D" id="2.40.50.120">
    <property type="match status" value="1"/>
</dbReference>
<dbReference type="Gene3D" id="3.90.370.10">
    <property type="entry name" value="Tissue inhibitor of metalloproteinase-1. Chain B, domain 1"/>
    <property type="match status" value="1"/>
</dbReference>
<dbReference type="InterPro" id="IPR001134">
    <property type="entry name" value="Netrin_domain"/>
</dbReference>
<dbReference type="InterPro" id="IPR001820">
    <property type="entry name" value="TIMP"/>
</dbReference>
<dbReference type="InterPro" id="IPR008993">
    <property type="entry name" value="TIMP-like_OB-fold"/>
</dbReference>
<dbReference type="InterPro" id="IPR027465">
    <property type="entry name" value="TIMP_C"/>
</dbReference>
<dbReference type="InterPro" id="IPR030490">
    <property type="entry name" value="TIMP_CS"/>
</dbReference>
<dbReference type="PANTHER" id="PTHR11844">
    <property type="entry name" value="METALLOPROTEASE INHIBITOR"/>
    <property type="match status" value="1"/>
</dbReference>
<dbReference type="PANTHER" id="PTHR11844:SF24">
    <property type="entry name" value="METALLOPROTEINASE INHIBITOR 2"/>
    <property type="match status" value="1"/>
</dbReference>
<dbReference type="Pfam" id="PF00965">
    <property type="entry name" value="TIMP"/>
    <property type="match status" value="1"/>
</dbReference>
<dbReference type="SMART" id="SM00206">
    <property type="entry name" value="NTR"/>
    <property type="match status" value="1"/>
</dbReference>
<dbReference type="SUPFAM" id="SSF50242">
    <property type="entry name" value="TIMP-like"/>
    <property type="match status" value="1"/>
</dbReference>
<dbReference type="PROSITE" id="PS50189">
    <property type="entry name" value="NTR"/>
    <property type="match status" value="1"/>
</dbReference>
<dbReference type="PROSITE" id="PS00288">
    <property type="entry name" value="TIMP"/>
    <property type="match status" value="1"/>
</dbReference>
<evidence type="ECO:0000250" key="1"/>
<evidence type="ECO:0000250" key="2">
    <source>
        <dbReference type="UniProtKB" id="P16035"/>
    </source>
</evidence>
<evidence type="ECO:0000255" key="3">
    <source>
        <dbReference type="PROSITE-ProRule" id="PRU00295"/>
    </source>
</evidence>
<evidence type="ECO:0000305" key="4"/>
<proteinExistence type="evidence at transcript level"/>
<keyword id="KW-1015">Disulfide bond</keyword>
<keyword id="KW-0479">Metal-binding</keyword>
<keyword id="KW-0481">Metalloenzyme inhibitor</keyword>
<keyword id="KW-0483">Metalloprotease inhibitor</keyword>
<keyword id="KW-0646">Protease inhibitor</keyword>
<keyword id="KW-1185">Reference proteome</keyword>
<keyword id="KW-0964">Secreted</keyword>
<keyword id="KW-0862">Zinc</keyword>
<comment type="function">
    <text>Complexes with metalloproteinases (such as collagenases) and irreversibly inactivates them by binding to their catalytic zinc cofactor.</text>
</comment>
<comment type="subunit">
    <text evidence="1">Interacts (via the C-terminal) with MMP2 (via the C-terminal PEX domain); the interaction inhibits the MMP2 activity.</text>
</comment>
<comment type="subcellular location">
    <subcellularLocation>
        <location>Secreted</location>
    </subcellularLocation>
</comment>
<comment type="PTM">
    <text evidence="1">The activity of TIMP2 is dependent on the presence of disulfide bonds.</text>
</comment>
<comment type="similarity">
    <text evidence="4">Belongs to the protease inhibitor I35 (TIMP) family.</text>
</comment>
<reference key="1">
    <citation type="journal article" date="1995" name="Inflamm. Res.">
        <title>Molecular cloning and characterization of rabbit TIMP2.</title>
        <authorList>
            <person name="Wertheimer S.J."/>
            <person name="Katz S.L."/>
        </authorList>
    </citation>
    <scope>NUCLEOTIDE SEQUENCE [MRNA]</scope>
</reference>
<reference key="2">
    <citation type="journal article" date="1998" name="Biochem. Biophys. Res. Commun.">
        <title>Temporal alterations in mRNA levels for proteinases and inhibitors and their potential regulators in the healing medial collateral ligament.</title>
        <authorList>
            <person name="Reno C."/>
            <person name="Boykiw R."/>
            <person name="Martinez M.L."/>
            <person name="Hart D.A."/>
        </authorList>
    </citation>
    <scope>NUCLEOTIDE SEQUENCE [MRNA] OF 17-154</scope>
    <source>
        <strain>New Zealand white</strain>
    </source>
</reference>
<name>TIMP2_RABIT</name>
<sequence>CSCSPVHPQQAFCNADIVIRAKAVNKKEVDSGNDIYGNPIKRIQYEIKQIKMFKGPDQDIEFIYTAPSSAVCGVSLDIGGKKEYLIAGKAEGNGNMHITLCDFIVPWDTLSATQKKSLNHRYQMGCECKITRCPMIPCYISSPDECLWMDWVTEKNINRHQAKFFACIKRSDGSCAWYRGAAPPKQEFLDIEDP</sequence>
<gene>
    <name type="primary">TIMP2</name>
</gene>
<feature type="chain" id="PRO_0000220984" description="Metalloproteinase inhibitor 2">
    <location>
        <begin position="1"/>
        <end position="194"/>
    </location>
</feature>
<feature type="domain" description="NTR" evidence="3">
    <location>
        <begin position="1"/>
        <end position="126"/>
    </location>
</feature>
<feature type="region of interest" description="Involved in metalloproteinase-binding" evidence="2">
    <location>
        <begin position="1"/>
        <end position="4"/>
    </location>
</feature>
<feature type="region of interest" description="Involved in metalloproteinase-binding" evidence="2">
    <location>
        <begin position="69"/>
        <end position="70"/>
    </location>
</feature>
<feature type="binding site" evidence="2">
    <location>
        <position position="1"/>
    </location>
    <ligand>
        <name>Zn(2+)</name>
        <dbReference type="ChEBI" id="CHEBI:29105"/>
        <note>ligand shared with metalloproteinase partner</note>
    </ligand>
</feature>
<feature type="site" description="Involved in metalloproteinase-binding" evidence="2">
    <location>
        <position position="14"/>
    </location>
</feature>
<feature type="site" description="Involved in metalloproteinase-binding" evidence="2">
    <location>
        <position position="35"/>
    </location>
</feature>
<feature type="site" description="Involved in metalloproteinase-binding" evidence="2">
    <location>
        <position position="41"/>
    </location>
</feature>
<feature type="disulfide bond" evidence="3">
    <location>
        <begin position="1"/>
        <end position="72"/>
    </location>
</feature>
<feature type="disulfide bond" evidence="3">
    <location>
        <begin position="3"/>
        <end position="101"/>
    </location>
</feature>
<feature type="disulfide bond" evidence="3">
    <location>
        <begin position="13"/>
        <end position="126"/>
    </location>
</feature>
<feature type="disulfide bond" evidence="3">
    <location>
        <begin position="128"/>
        <end position="175"/>
    </location>
</feature>
<feature type="disulfide bond" evidence="3">
    <location>
        <begin position="133"/>
        <end position="138"/>
    </location>
</feature>
<feature type="disulfide bond" evidence="3">
    <location>
        <begin position="146"/>
        <end position="167"/>
    </location>
</feature>
<feature type="sequence conflict" description="In Ref. 2; AAC95005." evidence="4" ref="2">
    <original>I</original>
    <variation>V</variation>
    <location>
        <position position="17"/>
    </location>
</feature>
<feature type="sequence conflict" description="In Ref. 2; AAC95005." evidence="4" ref="2">
    <original>NK</original>
    <variation>SE</variation>
    <location>
        <begin position="25"/>
        <end position="26"/>
    </location>
</feature>
<feature type="sequence conflict" description="In Ref. 2; AAC95005." evidence="4" ref="2">
    <original>Q</original>
    <variation>K</variation>
    <location>
        <position position="58"/>
    </location>
</feature>
<feature type="sequence conflict" description="In Ref. 2; AAC95005." evidence="4" ref="2">
    <original>I</original>
    <variation>V</variation>
    <location>
        <position position="78"/>
    </location>
</feature>
<feature type="sequence conflict" description="In Ref. 2; AAC95005." evidence="4" ref="2">
    <original>NGN</original>
    <variation>DGR</variation>
    <location>
        <begin position="93"/>
        <end position="95"/>
    </location>
</feature>
<feature type="sequence conflict" description="In Ref. 2; AAC95005." evidence="4" ref="2">
    <original>T</original>
    <variation>S</variation>
    <location>
        <position position="109"/>
    </location>
</feature>
<feature type="sequence conflict" description="In Ref. 2; AAC95005." evidence="4" ref="2">
    <original>A</original>
    <variation>S</variation>
    <location>
        <position position="112"/>
    </location>
</feature>
<feature type="sequence conflict" description="In Ref. 2; AAC95005." evidence="4" ref="2">
    <original>T</original>
    <variation>S</variation>
    <location>
        <position position="131"/>
    </location>
</feature>
<protein>
    <recommendedName>
        <fullName>Metalloproteinase inhibitor 2</fullName>
    </recommendedName>
    <alternativeName>
        <fullName>Tissue inhibitor of metalloproteinases 2</fullName>
        <shortName>TIMP-2</shortName>
    </alternativeName>
</protein>
<accession>Q9TRZ7</accession>
<accession>O97589</accession>